<evidence type="ECO:0000255" key="1">
    <source>
        <dbReference type="HAMAP-Rule" id="MF_01142"/>
    </source>
</evidence>
<keyword id="KW-1003">Cell membrane</keyword>
<keyword id="KW-0204">Cytolysis</keyword>
<keyword id="KW-0472">Membrane</keyword>
<keyword id="KW-0812">Transmembrane</keyword>
<keyword id="KW-1133">Transmembrane helix</keyword>
<organism>
    <name type="scientific">Bacillus mycoides (strain KBAB4)</name>
    <name type="common">Bacillus weihenstephanensis</name>
    <dbReference type="NCBI Taxonomy" id="315730"/>
    <lineage>
        <taxon>Bacteria</taxon>
        <taxon>Bacillati</taxon>
        <taxon>Bacillota</taxon>
        <taxon>Bacilli</taxon>
        <taxon>Bacillales</taxon>
        <taxon>Bacillaceae</taxon>
        <taxon>Bacillus</taxon>
        <taxon>Bacillus cereus group</taxon>
    </lineage>
</organism>
<protein>
    <recommendedName>
        <fullName evidence="1">Antiholin-like protein LrgB</fullName>
    </recommendedName>
</protein>
<sequence length="230" mass="24351">MASTMTPYFGIVVSLIAYGIGTLLFKHSKGFFLFTPLFVAMVLGIVFLKVGNFTFEEYNTGGKMISFFLEPATIAFAIPLYKQVDKLKKYWWQILSAIVVGSICSVVVVYIVAKAIGLDTAVMNSMLPQAATTAIALPISESIGGIPAITSFAVIFNAVIVYALGALFLKTFRVKHPIAKGLALGTAGHALGVAVGIEMGEVEAAMASIAVTVVGVVTVVVIPMFMPFIG</sequence>
<dbReference type="EMBL" id="CP000903">
    <property type="protein sequence ID" value="ABY46376.1"/>
    <property type="molecule type" value="Genomic_DNA"/>
</dbReference>
<dbReference type="RefSeq" id="WP_002191346.1">
    <property type="nucleotide sequence ID" value="NC_010184.1"/>
</dbReference>
<dbReference type="KEGG" id="bwe:BcerKBAB4_5232"/>
<dbReference type="eggNOG" id="COG1346">
    <property type="taxonomic scope" value="Bacteria"/>
</dbReference>
<dbReference type="HOGENOM" id="CLU_082099_1_0_9"/>
<dbReference type="Proteomes" id="UP000002154">
    <property type="component" value="Chromosome"/>
</dbReference>
<dbReference type="GO" id="GO:0005886">
    <property type="term" value="C:plasma membrane"/>
    <property type="evidence" value="ECO:0007669"/>
    <property type="project" value="UniProtKB-SubCell"/>
</dbReference>
<dbReference type="GO" id="GO:0019835">
    <property type="term" value="P:cytolysis"/>
    <property type="evidence" value="ECO:0007669"/>
    <property type="project" value="UniProtKB-UniRule"/>
</dbReference>
<dbReference type="GO" id="GO:0031640">
    <property type="term" value="P:killing of cells of another organism"/>
    <property type="evidence" value="ECO:0007669"/>
    <property type="project" value="UniProtKB-KW"/>
</dbReference>
<dbReference type="GO" id="GO:0012501">
    <property type="term" value="P:programmed cell death"/>
    <property type="evidence" value="ECO:0007669"/>
    <property type="project" value="UniProtKB-UniRule"/>
</dbReference>
<dbReference type="HAMAP" id="MF_01142">
    <property type="entry name" value="LrgB"/>
    <property type="match status" value="1"/>
</dbReference>
<dbReference type="InterPro" id="IPR024891">
    <property type="entry name" value="Antiholin-like_LrgB"/>
</dbReference>
<dbReference type="InterPro" id="IPR007300">
    <property type="entry name" value="CidB/LrgB"/>
</dbReference>
<dbReference type="NCBIfam" id="NF003291">
    <property type="entry name" value="PRK04288.1"/>
    <property type="match status" value="1"/>
</dbReference>
<dbReference type="PANTHER" id="PTHR30249:SF0">
    <property type="entry name" value="PLASTIDAL GLYCOLATE_GLYCERATE TRANSLOCATOR 1, CHLOROPLASTIC"/>
    <property type="match status" value="1"/>
</dbReference>
<dbReference type="PANTHER" id="PTHR30249">
    <property type="entry name" value="PUTATIVE SEROTONIN TRANSPORTER"/>
    <property type="match status" value="1"/>
</dbReference>
<dbReference type="Pfam" id="PF04172">
    <property type="entry name" value="LrgB"/>
    <property type="match status" value="1"/>
</dbReference>
<reference key="1">
    <citation type="journal article" date="2008" name="Chem. Biol. Interact.">
        <title>Extending the Bacillus cereus group genomics to putative food-borne pathogens of different toxicity.</title>
        <authorList>
            <person name="Lapidus A."/>
            <person name="Goltsman E."/>
            <person name="Auger S."/>
            <person name="Galleron N."/>
            <person name="Segurens B."/>
            <person name="Dossat C."/>
            <person name="Land M.L."/>
            <person name="Broussolle V."/>
            <person name="Brillard J."/>
            <person name="Guinebretiere M.-H."/>
            <person name="Sanchis V."/>
            <person name="Nguen-the C."/>
            <person name="Lereclus D."/>
            <person name="Richardson P."/>
            <person name="Wincker P."/>
            <person name="Weissenbach J."/>
            <person name="Ehrlich S.D."/>
            <person name="Sorokin A."/>
        </authorList>
    </citation>
    <scope>NUCLEOTIDE SEQUENCE [LARGE SCALE GENOMIC DNA]</scope>
    <source>
        <strain>KBAB4</strain>
    </source>
</reference>
<name>LRGB_BACMK</name>
<feature type="chain" id="PRO_1000137352" description="Antiholin-like protein LrgB">
    <location>
        <begin position="1"/>
        <end position="230"/>
    </location>
</feature>
<feature type="transmembrane region" description="Helical" evidence="1">
    <location>
        <begin position="5"/>
        <end position="25"/>
    </location>
</feature>
<feature type="transmembrane region" description="Helical" evidence="1">
    <location>
        <begin position="30"/>
        <end position="50"/>
    </location>
</feature>
<feature type="transmembrane region" description="Helical" evidence="1">
    <location>
        <begin position="61"/>
        <end position="81"/>
    </location>
</feature>
<feature type="transmembrane region" description="Helical" evidence="1">
    <location>
        <begin position="92"/>
        <end position="112"/>
    </location>
</feature>
<feature type="transmembrane region" description="Helical" evidence="1">
    <location>
        <begin position="126"/>
        <end position="146"/>
    </location>
</feature>
<feature type="transmembrane region" description="Helical" evidence="1">
    <location>
        <begin position="149"/>
        <end position="169"/>
    </location>
</feature>
<feature type="transmembrane region" description="Helical" evidence="1">
    <location>
        <begin position="177"/>
        <end position="197"/>
    </location>
</feature>
<feature type="transmembrane region" description="Helical" evidence="1">
    <location>
        <begin position="209"/>
        <end position="229"/>
    </location>
</feature>
<gene>
    <name evidence="1" type="primary">lrgB</name>
    <name type="ordered locus">BcerKBAB4_5232</name>
</gene>
<comment type="function">
    <text evidence="1">Inhibits the expression or activity of extracellular murein hydrolases by interacting, possibly with LrgA, with the holin-like protein CidA. The LrgAB and CidA proteins may affect the proton motive force of the membrane. May be involved in programmed cell death (PCD), possibly triggering PCD in response to antibiotics and environmental stresses.</text>
</comment>
<comment type="subcellular location">
    <subcellularLocation>
        <location evidence="1">Cell membrane</location>
        <topology evidence="1">Multi-pass membrane protein</topology>
    </subcellularLocation>
</comment>
<comment type="similarity">
    <text evidence="1">Belongs to the CidB/LrgB family. LrgB subfamily.</text>
</comment>
<proteinExistence type="inferred from homology"/>
<accession>A9VTH6</accession>